<accession>A5IC73</accession>
<keyword id="KW-0067">ATP-binding</keyword>
<keyword id="KW-0963">Cytoplasm</keyword>
<keyword id="KW-0227">DNA damage</keyword>
<keyword id="KW-0233">DNA recombination</keyword>
<keyword id="KW-0234">DNA repair</keyword>
<keyword id="KW-0238">DNA-binding</keyword>
<keyword id="KW-0378">Hydrolase</keyword>
<keyword id="KW-0547">Nucleotide-binding</keyword>
<evidence type="ECO:0000255" key="1">
    <source>
        <dbReference type="HAMAP-Rule" id="MF_00016"/>
    </source>
</evidence>
<evidence type="ECO:0000305" key="2"/>
<name>RUVB_LEGPC</name>
<proteinExistence type="inferred from homology"/>
<organism>
    <name type="scientific">Legionella pneumophila (strain Corby)</name>
    <dbReference type="NCBI Taxonomy" id="400673"/>
    <lineage>
        <taxon>Bacteria</taxon>
        <taxon>Pseudomonadati</taxon>
        <taxon>Pseudomonadota</taxon>
        <taxon>Gammaproteobacteria</taxon>
        <taxon>Legionellales</taxon>
        <taxon>Legionellaceae</taxon>
        <taxon>Legionella</taxon>
    </lineage>
</organism>
<protein>
    <recommendedName>
        <fullName evidence="1">Holliday junction branch migration complex subunit RuvB</fullName>
        <ecNumber evidence="1">3.6.4.-</ecNumber>
    </recommendedName>
</protein>
<comment type="function">
    <text evidence="1">The RuvA-RuvB-RuvC complex processes Holliday junction (HJ) DNA during genetic recombination and DNA repair, while the RuvA-RuvB complex plays an important role in the rescue of blocked DNA replication forks via replication fork reversal (RFR). RuvA specifically binds to HJ cruciform DNA, conferring on it an open structure. The RuvB hexamer acts as an ATP-dependent pump, pulling dsDNA into and through the RuvAB complex. RuvB forms 2 homohexamers on either side of HJ DNA bound by 1 or 2 RuvA tetramers; 4 subunits per hexamer contact DNA at a time. Coordinated motions by a converter formed by DNA-disengaged RuvB subunits stimulates ATP hydrolysis and nucleotide exchange. Immobilization of the converter enables RuvB to convert the ATP-contained energy into a lever motion, pulling 2 nucleotides of DNA out of the RuvA tetramer per ATP hydrolyzed, thus driving DNA branch migration. The RuvB motors rotate together with the DNA substrate, which together with the progressing nucleotide cycle form the mechanistic basis for DNA recombination by continuous HJ branch migration. Branch migration allows RuvC to scan DNA until it finds its consensus sequence, where it cleaves and resolves cruciform DNA.</text>
</comment>
<comment type="catalytic activity">
    <reaction evidence="1">
        <text>ATP + H2O = ADP + phosphate + H(+)</text>
        <dbReference type="Rhea" id="RHEA:13065"/>
        <dbReference type="ChEBI" id="CHEBI:15377"/>
        <dbReference type="ChEBI" id="CHEBI:15378"/>
        <dbReference type="ChEBI" id="CHEBI:30616"/>
        <dbReference type="ChEBI" id="CHEBI:43474"/>
        <dbReference type="ChEBI" id="CHEBI:456216"/>
    </reaction>
</comment>
<comment type="subunit">
    <text evidence="1">Homohexamer. Forms an RuvA(8)-RuvB(12)-Holliday junction (HJ) complex. HJ DNA is sandwiched between 2 RuvA tetramers; dsDNA enters through RuvA and exits via RuvB. An RuvB hexamer assembles on each DNA strand where it exits the tetramer. Each RuvB hexamer is contacted by two RuvA subunits (via domain III) on 2 adjacent RuvB subunits; this complex drives branch migration. In the full resolvosome a probable DNA-RuvA(4)-RuvB(12)-RuvC(2) complex forms which resolves the HJ.</text>
</comment>
<comment type="subcellular location">
    <subcellularLocation>
        <location evidence="1">Cytoplasm</location>
    </subcellularLocation>
</comment>
<comment type="domain">
    <text evidence="1">Has 3 domains, the large (RuvB-L) and small ATPase (RuvB-S) domains and the C-terminal head (RuvB-H) domain. The head domain binds DNA, while the ATPase domains jointly bind ATP, ADP or are empty depending on the state of the subunit in the translocation cycle. During a single DNA translocation step the structure of each domain remains the same, but their relative positions change.</text>
</comment>
<comment type="similarity">
    <text evidence="1">Belongs to the RuvB family.</text>
</comment>
<comment type="sequence caution" evidence="2">
    <conflict type="erroneous initiation">
        <sequence resource="EMBL-CDS" id="ABQ54973"/>
    </conflict>
    <text>Truncated N-terminus.</text>
</comment>
<dbReference type="EC" id="3.6.4.-" evidence="1"/>
<dbReference type="EMBL" id="CP000675">
    <property type="protein sequence ID" value="ABQ54973.1"/>
    <property type="status" value="ALT_INIT"/>
    <property type="molecule type" value="Genomic_DNA"/>
</dbReference>
<dbReference type="RefSeq" id="WP_011213854.1">
    <property type="nucleotide sequence ID" value="NZ_JAPMSS010000002.1"/>
</dbReference>
<dbReference type="SMR" id="A5IC73"/>
<dbReference type="KEGG" id="lpc:LPC_1000"/>
<dbReference type="HOGENOM" id="CLU_055599_1_0_6"/>
<dbReference type="GO" id="GO:0005737">
    <property type="term" value="C:cytoplasm"/>
    <property type="evidence" value="ECO:0007669"/>
    <property type="project" value="UniProtKB-SubCell"/>
</dbReference>
<dbReference type="GO" id="GO:0048476">
    <property type="term" value="C:Holliday junction resolvase complex"/>
    <property type="evidence" value="ECO:0007669"/>
    <property type="project" value="UniProtKB-UniRule"/>
</dbReference>
<dbReference type="GO" id="GO:0005524">
    <property type="term" value="F:ATP binding"/>
    <property type="evidence" value="ECO:0007669"/>
    <property type="project" value="UniProtKB-UniRule"/>
</dbReference>
<dbReference type="GO" id="GO:0016887">
    <property type="term" value="F:ATP hydrolysis activity"/>
    <property type="evidence" value="ECO:0007669"/>
    <property type="project" value="InterPro"/>
</dbReference>
<dbReference type="GO" id="GO:0000400">
    <property type="term" value="F:four-way junction DNA binding"/>
    <property type="evidence" value="ECO:0007669"/>
    <property type="project" value="UniProtKB-UniRule"/>
</dbReference>
<dbReference type="GO" id="GO:0009378">
    <property type="term" value="F:four-way junction helicase activity"/>
    <property type="evidence" value="ECO:0007669"/>
    <property type="project" value="InterPro"/>
</dbReference>
<dbReference type="GO" id="GO:0006310">
    <property type="term" value="P:DNA recombination"/>
    <property type="evidence" value="ECO:0007669"/>
    <property type="project" value="UniProtKB-UniRule"/>
</dbReference>
<dbReference type="GO" id="GO:0006281">
    <property type="term" value="P:DNA repair"/>
    <property type="evidence" value="ECO:0007669"/>
    <property type="project" value="UniProtKB-UniRule"/>
</dbReference>
<dbReference type="CDD" id="cd00009">
    <property type="entry name" value="AAA"/>
    <property type="match status" value="1"/>
</dbReference>
<dbReference type="FunFam" id="1.10.10.10:FF:000086">
    <property type="entry name" value="Holliday junction ATP-dependent DNA helicase RuvB"/>
    <property type="match status" value="1"/>
</dbReference>
<dbReference type="FunFam" id="3.40.50.300:FF:000073">
    <property type="entry name" value="Holliday junction ATP-dependent DNA helicase RuvB"/>
    <property type="match status" value="1"/>
</dbReference>
<dbReference type="Gene3D" id="1.10.8.60">
    <property type="match status" value="1"/>
</dbReference>
<dbReference type="Gene3D" id="3.40.50.300">
    <property type="entry name" value="P-loop containing nucleotide triphosphate hydrolases"/>
    <property type="match status" value="1"/>
</dbReference>
<dbReference type="Gene3D" id="1.10.10.10">
    <property type="entry name" value="Winged helix-like DNA-binding domain superfamily/Winged helix DNA-binding domain"/>
    <property type="match status" value="1"/>
</dbReference>
<dbReference type="HAMAP" id="MF_00016">
    <property type="entry name" value="DNA_HJ_migration_RuvB"/>
    <property type="match status" value="1"/>
</dbReference>
<dbReference type="InterPro" id="IPR003593">
    <property type="entry name" value="AAA+_ATPase"/>
</dbReference>
<dbReference type="InterPro" id="IPR041445">
    <property type="entry name" value="AAA_lid_4"/>
</dbReference>
<dbReference type="InterPro" id="IPR004605">
    <property type="entry name" value="DNA_helicase_Holl-junc_RuvB"/>
</dbReference>
<dbReference type="InterPro" id="IPR027417">
    <property type="entry name" value="P-loop_NTPase"/>
</dbReference>
<dbReference type="InterPro" id="IPR008824">
    <property type="entry name" value="RuvB-like_N"/>
</dbReference>
<dbReference type="InterPro" id="IPR008823">
    <property type="entry name" value="RuvB_C"/>
</dbReference>
<dbReference type="InterPro" id="IPR036388">
    <property type="entry name" value="WH-like_DNA-bd_sf"/>
</dbReference>
<dbReference type="InterPro" id="IPR036390">
    <property type="entry name" value="WH_DNA-bd_sf"/>
</dbReference>
<dbReference type="NCBIfam" id="NF000868">
    <property type="entry name" value="PRK00080.1"/>
    <property type="match status" value="1"/>
</dbReference>
<dbReference type="NCBIfam" id="TIGR00635">
    <property type="entry name" value="ruvB"/>
    <property type="match status" value="1"/>
</dbReference>
<dbReference type="PANTHER" id="PTHR42848">
    <property type="match status" value="1"/>
</dbReference>
<dbReference type="PANTHER" id="PTHR42848:SF1">
    <property type="entry name" value="HOLLIDAY JUNCTION BRANCH MIGRATION COMPLEX SUBUNIT RUVB"/>
    <property type="match status" value="1"/>
</dbReference>
<dbReference type="Pfam" id="PF17864">
    <property type="entry name" value="AAA_lid_4"/>
    <property type="match status" value="1"/>
</dbReference>
<dbReference type="Pfam" id="PF05491">
    <property type="entry name" value="RuvB_C"/>
    <property type="match status" value="1"/>
</dbReference>
<dbReference type="Pfam" id="PF05496">
    <property type="entry name" value="RuvB_N"/>
    <property type="match status" value="1"/>
</dbReference>
<dbReference type="SMART" id="SM00382">
    <property type="entry name" value="AAA"/>
    <property type="match status" value="1"/>
</dbReference>
<dbReference type="SUPFAM" id="SSF52540">
    <property type="entry name" value="P-loop containing nucleoside triphosphate hydrolases"/>
    <property type="match status" value="1"/>
</dbReference>
<dbReference type="SUPFAM" id="SSF46785">
    <property type="entry name" value="Winged helix' DNA-binding domain"/>
    <property type="match status" value="1"/>
</dbReference>
<reference key="1">
    <citation type="submission" date="2006-11" db="EMBL/GenBank/DDBJ databases">
        <title>Identification and characterization of a new conjugation/ type IVA secretion system (trb/tra) of L. pneumophila Corby localized on a mobile genomic island.</title>
        <authorList>
            <person name="Gloeckner G."/>
            <person name="Albert-Weissenberger C."/>
            <person name="Weinmann E."/>
            <person name="Jacobi S."/>
            <person name="Schunder E."/>
            <person name="Steinert M."/>
            <person name="Buchrieser C."/>
            <person name="Hacker J."/>
            <person name="Heuner K."/>
        </authorList>
    </citation>
    <scope>NUCLEOTIDE SEQUENCE [LARGE SCALE GENOMIC DNA]</scope>
    <source>
        <strain>Corby</strain>
    </source>
</reference>
<sequence>MLESDRLISSQSIVSEDAMDRAIRPLSLSEYVGQDSVSSQMQIFINAARKRNDPLDHVLIFGPPGLGKTTLANIIAHEMGVNIRQTSGPVIERAGDIAAILTNLQQNDVLFIDEIHRLSPVIEEILYPAMEDYKLDIMIGEGPAARSIKLELPPFTLIGATTRAGLLTSPLRDRFGIVQRLEYYSVDSLTKIVARSAHLLGVPTKPEGAREIALRSRGTPRIANRLLRRVRDYSEVKGNGIITVDMAQQALEMLEVDQHGFDLMDRKLLLAVIEHFNGGPVGIDSIAAAIGEEKGTIEDVLEPFLIQQGFLMRTPRGRIATSKAYQHFGFSAIEQE</sequence>
<gene>
    <name evidence="1" type="primary">ruvB</name>
    <name type="ordered locus">LPC_1000</name>
</gene>
<feature type="chain" id="PRO_0000322810" description="Holliday junction branch migration complex subunit RuvB">
    <location>
        <begin position="1"/>
        <end position="336"/>
    </location>
</feature>
<feature type="region of interest" description="Large ATPase domain (RuvB-L)" evidence="1">
    <location>
        <begin position="4"/>
        <end position="184"/>
    </location>
</feature>
<feature type="region of interest" description="Small ATPAse domain (RuvB-S)" evidence="1">
    <location>
        <begin position="185"/>
        <end position="255"/>
    </location>
</feature>
<feature type="region of interest" description="Head domain (RuvB-H)" evidence="1">
    <location>
        <begin position="258"/>
        <end position="336"/>
    </location>
</feature>
<feature type="binding site" evidence="1">
    <location>
        <position position="23"/>
    </location>
    <ligand>
        <name>ATP</name>
        <dbReference type="ChEBI" id="CHEBI:30616"/>
    </ligand>
</feature>
<feature type="binding site" evidence="1">
    <location>
        <position position="24"/>
    </location>
    <ligand>
        <name>ATP</name>
        <dbReference type="ChEBI" id="CHEBI:30616"/>
    </ligand>
</feature>
<feature type="binding site" evidence="1">
    <location>
        <position position="65"/>
    </location>
    <ligand>
        <name>ATP</name>
        <dbReference type="ChEBI" id="CHEBI:30616"/>
    </ligand>
</feature>
<feature type="binding site" evidence="1">
    <location>
        <position position="68"/>
    </location>
    <ligand>
        <name>ATP</name>
        <dbReference type="ChEBI" id="CHEBI:30616"/>
    </ligand>
</feature>
<feature type="binding site" evidence="1">
    <location>
        <position position="69"/>
    </location>
    <ligand>
        <name>ATP</name>
        <dbReference type="ChEBI" id="CHEBI:30616"/>
    </ligand>
</feature>
<feature type="binding site" evidence="1">
    <location>
        <position position="69"/>
    </location>
    <ligand>
        <name>Mg(2+)</name>
        <dbReference type="ChEBI" id="CHEBI:18420"/>
    </ligand>
</feature>
<feature type="binding site" evidence="1">
    <location>
        <position position="70"/>
    </location>
    <ligand>
        <name>ATP</name>
        <dbReference type="ChEBI" id="CHEBI:30616"/>
    </ligand>
</feature>
<feature type="binding site" evidence="1">
    <location>
        <begin position="131"/>
        <end position="133"/>
    </location>
    <ligand>
        <name>ATP</name>
        <dbReference type="ChEBI" id="CHEBI:30616"/>
    </ligand>
</feature>
<feature type="binding site" evidence="1">
    <location>
        <position position="174"/>
    </location>
    <ligand>
        <name>ATP</name>
        <dbReference type="ChEBI" id="CHEBI:30616"/>
    </ligand>
</feature>
<feature type="binding site" evidence="1">
    <location>
        <position position="184"/>
    </location>
    <ligand>
        <name>ATP</name>
        <dbReference type="ChEBI" id="CHEBI:30616"/>
    </ligand>
</feature>
<feature type="binding site" evidence="1">
    <location>
        <position position="221"/>
    </location>
    <ligand>
        <name>ATP</name>
        <dbReference type="ChEBI" id="CHEBI:30616"/>
    </ligand>
</feature>
<feature type="binding site" evidence="1">
    <location>
        <position position="313"/>
    </location>
    <ligand>
        <name>DNA</name>
        <dbReference type="ChEBI" id="CHEBI:16991"/>
    </ligand>
</feature>
<feature type="binding site" evidence="1">
    <location>
        <position position="318"/>
    </location>
    <ligand>
        <name>DNA</name>
        <dbReference type="ChEBI" id="CHEBI:16991"/>
    </ligand>
</feature>